<keyword id="KW-0687">Ribonucleoprotein</keyword>
<keyword id="KW-0689">Ribosomal protein</keyword>
<keyword id="KW-0694">RNA-binding</keyword>
<keyword id="KW-0699">rRNA-binding</keyword>
<dbReference type="EMBL" id="CP000745">
    <property type="protein sequence ID" value="ABR65859.1"/>
    <property type="molecule type" value="Genomic_DNA"/>
</dbReference>
<dbReference type="SMR" id="A6VHD3"/>
<dbReference type="STRING" id="426368.MmarC7_0792"/>
<dbReference type="KEGG" id="mmz:MmarC7_0792"/>
<dbReference type="eggNOG" id="arCOG04071">
    <property type="taxonomic scope" value="Archaea"/>
</dbReference>
<dbReference type="HOGENOM" id="CLU_026535_0_0_2"/>
<dbReference type="OrthoDB" id="10737at2157"/>
<dbReference type="GO" id="GO:1990904">
    <property type="term" value="C:ribonucleoprotein complex"/>
    <property type="evidence" value="ECO:0007669"/>
    <property type="project" value="UniProtKB-KW"/>
</dbReference>
<dbReference type="GO" id="GO:0005840">
    <property type="term" value="C:ribosome"/>
    <property type="evidence" value="ECO:0007669"/>
    <property type="project" value="UniProtKB-KW"/>
</dbReference>
<dbReference type="GO" id="GO:0019843">
    <property type="term" value="F:rRNA binding"/>
    <property type="evidence" value="ECO:0007669"/>
    <property type="project" value="UniProtKB-UniRule"/>
</dbReference>
<dbReference type="GO" id="GO:0003735">
    <property type="term" value="F:structural constituent of ribosome"/>
    <property type="evidence" value="ECO:0007669"/>
    <property type="project" value="InterPro"/>
</dbReference>
<dbReference type="GO" id="GO:0006412">
    <property type="term" value="P:translation"/>
    <property type="evidence" value="ECO:0007669"/>
    <property type="project" value="UniProtKB-UniRule"/>
</dbReference>
<dbReference type="Gene3D" id="3.40.1370.10">
    <property type="match status" value="1"/>
</dbReference>
<dbReference type="HAMAP" id="MF_01328_A">
    <property type="entry name" value="Ribosomal_uL4_A"/>
    <property type="match status" value="1"/>
</dbReference>
<dbReference type="InterPro" id="IPR002136">
    <property type="entry name" value="Ribosomal_uL4"/>
</dbReference>
<dbReference type="InterPro" id="IPR023574">
    <property type="entry name" value="Ribosomal_uL4_dom_sf"/>
</dbReference>
<dbReference type="InterPro" id="IPR013000">
    <property type="entry name" value="Ribosomal_uL4_euk/arc_CS"/>
</dbReference>
<dbReference type="InterPro" id="IPR045240">
    <property type="entry name" value="Ribosomal_uL4_euk/arch"/>
</dbReference>
<dbReference type="InterPro" id="IPR019970">
    <property type="entry name" value="Ribosomall_uL4-arc"/>
</dbReference>
<dbReference type="NCBIfam" id="TIGR03672">
    <property type="entry name" value="rpl4p_arch"/>
    <property type="match status" value="1"/>
</dbReference>
<dbReference type="PANTHER" id="PTHR19431">
    <property type="entry name" value="60S RIBOSOMAL PROTEIN L4"/>
    <property type="match status" value="1"/>
</dbReference>
<dbReference type="Pfam" id="PF00573">
    <property type="entry name" value="Ribosomal_L4"/>
    <property type="match status" value="1"/>
</dbReference>
<dbReference type="SUPFAM" id="SSF52166">
    <property type="entry name" value="Ribosomal protein L4"/>
    <property type="match status" value="1"/>
</dbReference>
<dbReference type="PROSITE" id="PS00939">
    <property type="entry name" value="RIBOSOMAL_L1E"/>
    <property type="match status" value="1"/>
</dbReference>
<name>RL4_METM7</name>
<gene>
    <name evidence="1" type="primary">rpl4</name>
    <name type="ordered locus">MmarC7_0792</name>
</gene>
<organism>
    <name type="scientific">Methanococcus maripaludis (strain C7 / ATCC BAA-1331)</name>
    <dbReference type="NCBI Taxonomy" id="426368"/>
    <lineage>
        <taxon>Archaea</taxon>
        <taxon>Methanobacteriati</taxon>
        <taxon>Methanobacteriota</taxon>
        <taxon>Methanomada group</taxon>
        <taxon>Methanococci</taxon>
        <taxon>Methanococcales</taxon>
        <taxon>Methanococcaceae</taxon>
        <taxon>Methanococcus</taxon>
    </lineage>
</organism>
<comment type="function">
    <text evidence="1">One of the primary rRNA binding proteins, this protein initially binds near the 5'-end of the 23S rRNA. It is important during the early stages of 50S assembly. It makes multiple contacts with different domains of the 23S rRNA in the assembled 50S subunit and ribosome.</text>
</comment>
<comment type="function">
    <text evidence="1">Forms part of the polypeptide exit tunnel.</text>
</comment>
<comment type="subunit">
    <text evidence="1">Part of the 50S ribosomal subunit.</text>
</comment>
<comment type="similarity">
    <text evidence="1">Belongs to the universal ribosomal protein uL4 family.</text>
</comment>
<evidence type="ECO:0000255" key="1">
    <source>
        <dbReference type="HAMAP-Rule" id="MF_01328"/>
    </source>
</evidence>
<evidence type="ECO:0000305" key="2"/>
<reference key="1">
    <citation type="submission" date="2007-06" db="EMBL/GenBank/DDBJ databases">
        <title>Complete sequence of Methanococcus maripaludis C7.</title>
        <authorList>
            <consortium name="US DOE Joint Genome Institute"/>
            <person name="Copeland A."/>
            <person name="Lucas S."/>
            <person name="Lapidus A."/>
            <person name="Barry K."/>
            <person name="Glavina del Rio T."/>
            <person name="Dalin E."/>
            <person name="Tice H."/>
            <person name="Pitluck S."/>
            <person name="Clum A."/>
            <person name="Schmutz J."/>
            <person name="Larimer F."/>
            <person name="Land M."/>
            <person name="Hauser L."/>
            <person name="Kyrpides N."/>
            <person name="Anderson I."/>
            <person name="Sieprawska-Lupa M."/>
            <person name="Whitman W.B."/>
            <person name="Richardson P."/>
        </authorList>
    </citation>
    <scope>NUCLEOTIDE SEQUENCE [LARGE SCALE GENOMIC DNA]</scope>
    <source>
        <strain>C7 / ATCC BAA-1331</strain>
    </source>
</reference>
<protein>
    <recommendedName>
        <fullName evidence="1">Large ribosomal subunit protein uL4</fullName>
    </recommendedName>
    <alternativeName>
        <fullName evidence="2">50S ribosomal protein L4</fullName>
    </alternativeName>
</protein>
<proteinExistence type="inferred from homology"/>
<feature type="chain" id="PRO_1000142152" description="Large ribosomal subunit protein uL4">
    <location>
        <begin position="1"/>
        <end position="252"/>
    </location>
</feature>
<sequence>MNVKVYNLDGSEKGDIELPAVFETEYRPDLIKRAVISSLTAKLQPKGCDAFAGYRTSAKSIGKGHGKARVRRTAQGAGAFVPQAVGGRRAHPPKVEKILFERINRKEKLKALASAIAASAIPEIVSARGHKIEGVPSLPLVVNADFESLAKTKEVLEVFKTLKLDADLARAKDGIKIKAGRAKLRGRKYKKPKSVLVVVGDACEAIAASRNLAGVDVITANDLSAIHIAPGTMAGRLTLWTENAIEKINGRF</sequence>
<accession>A6VHD3</accession>